<name>ERMS_STRFR</name>
<evidence type="ECO:0000255" key="1">
    <source>
        <dbReference type="PROSITE-ProRule" id="PRU01026"/>
    </source>
</evidence>
<evidence type="ECO:0000256" key="2">
    <source>
        <dbReference type="SAM" id="MobiDB-lite"/>
    </source>
</evidence>
<dbReference type="EC" id="2.1.1.184"/>
<dbReference type="EMBL" id="M19269">
    <property type="protein sequence ID" value="AAA26742.1"/>
    <property type="molecule type" value="Genomic_DNA"/>
</dbReference>
<dbReference type="PIR" id="A27741">
    <property type="entry name" value="A27741"/>
</dbReference>
<dbReference type="RefSeq" id="WP_063844819.1">
    <property type="nucleotide sequence ID" value="NG_047837.1"/>
</dbReference>
<dbReference type="SMR" id="P45439"/>
<dbReference type="STRING" id="1906.SFRA_22030"/>
<dbReference type="CARD" id="ARO:3001304">
    <property type="molecule name" value="ErmS"/>
    <property type="mechanism identifier" value="ARO:0001001"/>
    <property type="mechanism name" value="antibiotic target alteration"/>
</dbReference>
<dbReference type="KEGG" id="ag:AAA26742"/>
<dbReference type="eggNOG" id="COG0030">
    <property type="taxonomic scope" value="Bacteria"/>
</dbReference>
<dbReference type="SABIO-RK" id="P45439"/>
<dbReference type="GO" id="GO:0005829">
    <property type="term" value="C:cytosol"/>
    <property type="evidence" value="ECO:0007669"/>
    <property type="project" value="TreeGrafter"/>
</dbReference>
<dbReference type="GO" id="GO:0052910">
    <property type="term" value="F:23S rRNA (adenine(2085)-N(6))-dimethyltransferase activity"/>
    <property type="evidence" value="ECO:0007669"/>
    <property type="project" value="UniProtKB-EC"/>
</dbReference>
<dbReference type="GO" id="GO:0003723">
    <property type="term" value="F:RNA binding"/>
    <property type="evidence" value="ECO:0007669"/>
    <property type="project" value="UniProtKB-KW"/>
</dbReference>
<dbReference type="GO" id="GO:0000179">
    <property type="term" value="F:rRNA (adenine-N6,N6-)-dimethyltransferase activity"/>
    <property type="evidence" value="ECO:0007669"/>
    <property type="project" value="InterPro"/>
</dbReference>
<dbReference type="GO" id="GO:0046677">
    <property type="term" value="P:response to antibiotic"/>
    <property type="evidence" value="ECO:0007669"/>
    <property type="project" value="UniProtKB-KW"/>
</dbReference>
<dbReference type="Gene3D" id="3.40.50.150">
    <property type="entry name" value="Vaccinia Virus protein VP39"/>
    <property type="match status" value="1"/>
</dbReference>
<dbReference type="InterPro" id="IPR001737">
    <property type="entry name" value="KsgA/Erm"/>
</dbReference>
<dbReference type="InterPro" id="IPR020596">
    <property type="entry name" value="rRNA_Ade_Mease_Trfase_CS"/>
</dbReference>
<dbReference type="InterPro" id="IPR020598">
    <property type="entry name" value="rRNA_Ade_methylase_Trfase_N"/>
</dbReference>
<dbReference type="InterPro" id="IPR029063">
    <property type="entry name" value="SAM-dependent_MTases_sf"/>
</dbReference>
<dbReference type="NCBIfam" id="NF000499">
    <property type="entry name" value="Erm23S_rRNA_broad"/>
    <property type="match status" value="1"/>
</dbReference>
<dbReference type="NCBIfam" id="NF000337">
    <property type="entry name" value="erm_SHROVE"/>
    <property type="match status" value="1"/>
</dbReference>
<dbReference type="NCBIfam" id="NF000024">
    <property type="entry name" value="ErmS"/>
    <property type="match status" value="1"/>
</dbReference>
<dbReference type="PANTHER" id="PTHR11727">
    <property type="entry name" value="DIMETHYLADENOSINE TRANSFERASE"/>
    <property type="match status" value="1"/>
</dbReference>
<dbReference type="PANTHER" id="PTHR11727:SF7">
    <property type="entry name" value="DIMETHYLADENOSINE TRANSFERASE-RELATED"/>
    <property type="match status" value="1"/>
</dbReference>
<dbReference type="Pfam" id="PF00398">
    <property type="entry name" value="RrnaAD"/>
    <property type="match status" value="1"/>
</dbReference>
<dbReference type="SMART" id="SM00650">
    <property type="entry name" value="rADc"/>
    <property type="match status" value="1"/>
</dbReference>
<dbReference type="SUPFAM" id="SSF53335">
    <property type="entry name" value="S-adenosyl-L-methionine-dependent methyltransferases"/>
    <property type="match status" value="1"/>
</dbReference>
<dbReference type="PROSITE" id="PS01131">
    <property type="entry name" value="RRNA_A_DIMETH"/>
    <property type="match status" value="1"/>
</dbReference>
<dbReference type="PROSITE" id="PS51689">
    <property type="entry name" value="SAM_RNA_A_N6_MT"/>
    <property type="match status" value="1"/>
</dbReference>
<feature type="chain" id="PRO_0000101686" description="rRNA adenine N-6-methyltransferase">
    <location>
        <begin position="1"/>
        <end position="319"/>
    </location>
</feature>
<feature type="region of interest" description="Disordered" evidence="2">
    <location>
        <begin position="1"/>
        <end position="59"/>
    </location>
</feature>
<feature type="compositionally biased region" description="Basic and acidic residues" evidence="2">
    <location>
        <begin position="26"/>
        <end position="41"/>
    </location>
</feature>
<feature type="binding site" evidence="1">
    <location>
        <position position="66"/>
    </location>
    <ligand>
        <name>S-adenosyl-L-methionine</name>
        <dbReference type="ChEBI" id="CHEBI:59789"/>
    </ligand>
</feature>
<feature type="binding site" evidence="1">
    <location>
        <position position="68"/>
    </location>
    <ligand>
        <name>S-adenosyl-L-methionine</name>
        <dbReference type="ChEBI" id="CHEBI:59789"/>
    </ligand>
</feature>
<feature type="binding site" evidence="1">
    <location>
        <position position="93"/>
    </location>
    <ligand>
        <name>S-adenosyl-L-methionine</name>
        <dbReference type="ChEBI" id="CHEBI:59789"/>
    </ligand>
</feature>
<feature type="binding site" evidence="1">
    <location>
        <position position="114"/>
    </location>
    <ligand>
        <name>S-adenosyl-L-methionine</name>
        <dbReference type="ChEBI" id="CHEBI:59789"/>
    </ligand>
</feature>
<feature type="binding site" evidence="1">
    <location>
        <position position="141"/>
    </location>
    <ligand>
        <name>S-adenosyl-L-methionine</name>
        <dbReference type="ChEBI" id="CHEBI:59789"/>
    </ligand>
</feature>
<feature type="binding site" evidence="1">
    <location>
        <position position="157"/>
    </location>
    <ligand>
        <name>S-adenosyl-L-methionine</name>
        <dbReference type="ChEBI" id="CHEBI:59789"/>
    </ligand>
</feature>
<protein>
    <recommendedName>
        <fullName>rRNA adenine N-6-methyltransferase</fullName>
        <ecNumber>2.1.1.184</ecNumber>
    </recommendedName>
    <alternativeName>
        <fullName>Erythromycin resistance protein</fullName>
    </alternativeName>
    <alternativeName>
        <fullName>Macrolide-lincosamide-streptogramin B resistance protein</fullName>
    </alternativeName>
</protein>
<reference key="1">
    <citation type="journal article" date="1988" name="J. Bacteriol.">
        <title>Translational attenuation control of ermSF, an inducible resistance determinant encoding rRNA N-methyltransferase from Streptomyces fradiae.</title>
        <authorList>
            <person name="Kamimiya S."/>
            <person name="Weisblum B."/>
        </authorList>
    </citation>
    <scope>NUCLEOTIDE SEQUENCE [GENOMIC DNA]</scope>
    <source>
        <strain>NRRL 2338</strain>
    </source>
</reference>
<accession>P45439</accession>
<keyword id="KW-0046">Antibiotic resistance</keyword>
<keyword id="KW-0489">Methyltransferase</keyword>
<keyword id="KW-0694">RNA-binding</keyword>
<keyword id="KW-0949">S-adenosyl-L-methionine</keyword>
<keyword id="KW-0808">Transferase</keyword>
<organism>
    <name type="scientific">Streptomyces fradiae</name>
    <name type="common">Streptomyces roseoflavus</name>
    <dbReference type="NCBI Taxonomy" id="1906"/>
    <lineage>
        <taxon>Bacteria</taxon>
        <taxon>Bacillati</taxon>
        <taxon>Actinomycetota</taxon>
        <taxon>Actinomycetes</taxon>
        <taxon>Kitasatosporales</taxon>
        <taxon>Streptomycetaceae</taxon>
        <taxon>Streptomyces</taxon>
    </lineage>
</organism>
<comment type="function">
    <text>This protein produces a dimethylation of the adenine residue at position 2085 in 23S rRNA, resulting in reduced affinity between ribosomes and macrolide-lincosamide-streptogramin B antibiotics.</text>
</comment>
<comment type="catalytic activity">
    <reaction>
        <text>adenosine(2085) in 23S rRNA + 2 S-adenosyl-L-methionine = N(6)-dimethyladenosine(2085) in 23S rRNA + 2 S-adenosyl-L-homocysteine + 2 H(+)</text>
        <dbReference type="Rhea" id="RHEA:42784"/>
        <dbReference type="Rhea" id="RHEA-COMP:10237"/>
        <dbReference type="Rhea" id="RHEA-COMP:10238"/>
        <dbReference type="ChEBI" id="CHEBI:15378"/>
        <dbReference type="ChEBI" id="CHEBI:57856"/>
        <dbReference type="ChEBI" id="CHEBI:59789"/>
        <dbReference type="ChEBI" id="CHEBI:74411"/>
        <dbReference type="ChEBI" id="CHEBI:74493"/>
        <dbReference type="EC" id="2.1.1.184"/>
    </reaction>
</comment>
<comment type="similarity">
    <text evidence="1">Belongs to the class I-like SAM-binding methyltransferase superfamily. rRNA adenine N(6)-methyltransferase family.</text>
</comment>
<sequence>MARAPRSPHPARSRETSRAHPPYGTRADRAPGRGRDRDRSPDSPGNTSSRDGGRSPDRARRELSQNFLARRAVAERVARLVRPAPGGLLLEVGAGRGVLTEALAPYCGRLVAHEIDPRLLPALRDRFGGPHHAHVRISGGDFLAAPVPREPFALAGNIPYSRTAGIVDWALRARTLTSATFVTQLEYARKRTGDYGRWSLLTVRTWPRHEWRLLGRVSRREFRPVPRVDSGILRIERRERPLLPSAALGDYHRMVELGFSGVGGSLYASLRRAHRAGPLDAAFRAARLDRSVVVAYVTPEQWLTVFRTLRPVRSRPAGR</sequence>
<proteinExistence type="inferred from homology"/>
<gene>
    <name type="primary">ermSF</name>
    <name type="synonym">tlrA</name>
</gene>